<gene>
    <name evidence="1" type="primary">lolD</name>
    <name type="ordered locus">Bd1491</name>
</gene>
<feature type="chain" id="PRO_0000272060" description="Lipoprotein-releasing system ATP-binding protein LolD">
    <location>
        <begin position="1"/>
        <end position="220"/>
    </location>
</feature>
<feature type="domain" description="ABC transporter" evidence="1">
    <location>
        <begin position="1"/>
        <end position="220"/>
    </location>
</feature>
<feature type="binding site" evidence="1">
    <location>
        <begin position="37"/>
        <end position="44"/>
    </location>
    <ligand>
        <name>ATP</name>
        <dbReference type="ChEBI" id="CHEBI:30616"/>
    </ligand>
</feature>
<reference key="1">
    <citation type="journal article" date="2004" name="Science">
        <title>A predator unmasked: life cycle of Bdellovibrio bacteriovorus from a genomic perspective.</title>
        <authorList>
            <person name="Rendulic S."/>
            <person name="Jagtap P."/>
            <person name="Rosinus A."/>
            <person name="Eppinger M."/>
            <person name="Baar C."/>
            <person name="Lanz C."/>
            <person name="Keller H."/>
            <person name="Lambert C."/>
            <person name="Evans K.J."/>
            <person name="Goesmann A."/>
            <person name="Meyer F."/>
            <person name="Sockett R.E."/>
            <person name="Schuster S.C."/>
        </authorList>
    </citation>
    <scope>NUCLEOTIDE SEQUENCE [LARGE SCALE GENOMIC DNA]</scope>
    <source>
        <strain>ATCC 15356 / DSM 50701 / NCIMB 9529 / HD100</strain>
    </source>
</reference>
<comment type="function">
    <text evidence="1">Part of the ABC transporter complex LolCDE involved in the translocation of mature outer membrane-directed lipoproteins, from the inner membrane to the periplasmic chaperone, LolA. Responsible for the formation of the LolA-lipoprotein complex in an ATP-dependent manner.</text>
</comment>
<comment type="subunit">
    <text evidence="1">The complex is composed of two ATP-binding proteins (LolD) and two transmembrane proteins (LolC and LolE).</text>
</comment>
<comment type="subcellular location">
    <subcellularLocation>
        <location evidence="1">Cell inner membrane</location>
        <topology evidence="1">Peripheral membrane protein</topology>
    </subcellularLocation>
</comment>
<comment type="similarity">
    <text evidence="1">Belongs to the ABC transporter superfamily. Lipoprotein translocase (TC 3.A.1.125) family.</text>
</comment>
<protein>
    <recommendedName>
        <fullName evidence="1">Lipoprotein-releasing system ATP-binding protein LolD</fullName>
        <ecNumber evidence="1">7.6.2.-</ecNumber>
    </recommendedName>
</protein>
<keyword id="KW-0067">ATP-binding</keyword>
<keyword id="KW-0997">Cell inner membrane</keyword>
<keyword id="KW-1003">Cell membrane</keyword>
<keyword id="KW-0472">Membrane</keyword>
<keyword id="KW-0547">Nucleotide-binding</keyword>
<keyword id="KW-1185">Reference proteome</keyword>
<keyword id="KW-1278">Translocase</keyword>
<keyword id="KW-0813">Transport</keyword>
<accession>Q6MMY0</accession>
<sequence length="220" mass="24735">MRAVDIHKSYSQGVGELEILRGVSLDIREGEAFAILGASGAGKSTLLQIMGTLDRPNKGELYCEGRDLLAMSDDELSRFRNSEMGFVFQFHHLLSEFNALENVMIPCRVGGESIKVAKEKALHLLEFMGLADRRDHHPNQLSGGELQRVAIARALVRHPKILFADEPTGNLDSHTSGKIQELFFRLKEEMKLALVIVTHDLTFATRFPKVYRMKDGQWQS</sequence>
<organism>
    <name type="scientific">Bdellovibrio bacteriovorus (strain ATCC 15356 / DSM 50701 / NCIMB 9529 / HD100)</name>
    <dbReference type="NCBI Taxonomy" id="264462"/>
    <lineage>
        <taxon>Bacteria</taxon>
        <taxon>Pseudomonadati</taxon>
        <taxon>Bdellovibrionota</taxon>
        <taxon>Bdellovibrionia</taxon>
        <taxon>Bdellovibrionales</taxon>
        <taxon>Pseudobdellovibrionaceae</taxon>
        <taxon>Bdellovibrio</taxon>
    </lineage>
</organism>
<proteinExistence type="inferred from homology"/>
<name>LOLD_BDEBA</name>
<evidence type="ECO:0000255" key="1">
    <source>
        <dbReference type="HAMAP-Rule" id="MF_01708"/>
    </source>
</evidence>
<dbReference type="EC" id="7.6.2.-" evidence="1"/>
<dbReference type="EMBL" id="BX842650">
    <property type="protein sequence ID" value="CAE79373.1"/>
    <property type="molecule type" value="Genomic_DNA"/>
</dbReference>
<dbReference type="SMR" id="Q6MMY0"/>
<dbReference type="STRING" id="264462.Bd1491"/>
<dbReference type="KEGG" id="bba:Bd1491"/>
<dbReference type="eggNOG" id="COG1136">
    <property type="taxonomic scope" value="Bacteria"/>
</dbReference>
<dbReference type="HOGENOM" id="CLU_000604_1_22_7"/>
<dbReference type="Proteomes" id="UP000008080">
    <property type="component" value="Chromosome"/>
</dbReference>
<dbReference type="GO" id="GO:0005886">
    <property type="term" value="C:plasma membrane"/>
    <property type="evidence" value="ECO:0007669"/>
    <property type="project" value="UniProtKB-SubCell"/>
</dbReference>
<dbReference type="GO" id="GO:0005524">
    <property type="term" value="F:ATP binding"/>
    <property type="evidence" value="ECO:0007669"/>
    <property type="project" value="UniProtKB-KW"/>
</dbReference>
<dbReference type="GO" id="GO:0016887">
    <property type="term" value="F:ATP hydrolysis activity"/>
    <property type="evidence" value="ECO:0007669"/>
    <property type="project" value="InterPro"/>
</dbReference>
<dbReference type="GO" id="GO:0022857">
    <property type="term" value="F:transmembrane transporter activity"/>
    <property type="evidence" value="ECO:0007669"/>
    <property type="project" value="TreeGrafter"/>
</dbReference>
<dbReference type="CDD" id="cd03255">
    <property type="entry name" value="ABC_MJ0796_LolCDE_FtsE"/>
    <property type="match status" value="1"/>
</dbReference>
<dbReference type="FunFam" id="3.40.50.300:FF:000032">
    <property type="entry name" value="Export ABC transporter ATP-binding protein"/>
    <property type="match status" value="1"/>
</dbReference>
<dbReference type="Gene3D" id="3.40.50.300">
    <property type="entry name" value="P-loop containing nucleotide triphosphate hydrolases"/>
    <property type="match status" value="1"/>
</dbReference>
<dbReference type="InterPro" id="IPR003593">
    <property type="entry name" value="AAA+_ATPase"/>
</dbReference>
<dbReference type="InterPro" id="IPR003439">
    <property type="entry name" value="ABC_transporter-like_ATP-bd"/>
</dbReference>
<dbReference type="InterPro" id="IPR017871">
    <property type="entry name" value="ABC_transporter-like_CS"/>
</dbReference>
<dbReference type="InterPro" id="IPR015854">
    <property type="entry name" value="ABC_transpr_LolD-like"/>
</dbReference>
<dbReference type="InterPro" id="IPR017911">
    <property type="entry name" value="MacB-like_ATP-bd"/>
</dbReference>
<dbReference type="InterPro" id="IPR027417">
    <property type="entry name" value="P-loop_NTPase"/>
</dbReference>
<dbReference type="PANTHER" id="PTHR24220:SF86">
    <property type="entry name" value="ABC TRANSPORTER ABCH.1"/>
    <property type="match status" value="1"/>
</dbReference>
<dbReference type="PANTHER" id="PTHR24220">
    <property type="entry name" value="IMPORT ATP-BINDING PROTEIN"/>
    <property type="match status" value="1"/>
</dbReference>
<dbReference type="Pfam" id="PF00005">
    <property type="entry name" value="ABC_tran"/>
    <property type="match status" value="1"/>
</dbReference>
<dbReference type="SMART" id="SM00382">
    <property type="entry name" value="AAA"/>
    <property type="match status" value="1"/>
</dbReference>
<dbReference type="SUPFAM" id="SSF52540">
    <property type="entry name" value="P-loop containing nucleoside triphosphate hydrolases"/>
    <property type="match status" value="1"/>
</dbReference>
<dbReference type="PROSITE" id="PS00211">
    <property type="entry name" value="ABC_TRANSPORTER_1"/>
    <property type="match status" value="1"/>
</dbReference>
<dbReference type="PROSITE" id="PS50893">
    <property type="entry name" value="ABC_TRANSPORTER_2"/>
    <property type="match status" value="1"/>
</dbReference>
<dbReference type="PROSITE" id="PS51244">
    <property type="entry name" value="LOLD"/>
    <property type="match status" value="1"/>
</dbReference>